<accession>Q7A5Q1</accession>
<organism>
    <name type="scientific">Staphylococcus aureus (strain N315)</name>
    <dbReference type="NCBI Taxonomy" id="158879"/>
    <lineage>
        <taxon>Bacteria</taxon>
        <taxon>Bacillati</taxon>
        <taxon>Bacillota</taxon>
        <taxon>Bacilli</taxon>
        <taxon>Bacillales</taxon>
        <taxon>Staphylococcaceae</taxon>
        <taxon>Staphylococcus</taxon>
    </lineage>
</organism>
<proteinExistence type="evidence at protein level"/>
<comment type="function">
    <text evidence="1">Contributes to the expression of virulence factors and to pathogenicity. Involved in the production of hemolysin, DNase, protease and protein A (By similarity).</text>
</comment>
<comment type="similarity">
    <text evidence="2">Belongs to the CvfB family.</text>
</comment>
<feature type="chain" id="PRO_0000282295" description="Conserved virulence factor B">
    <location>
        <begin position="1"/>
        <end position="300"/>
    </location>
</feature>
<gene>
    <name type="primary">cvfB</name>
    <name type="ordered locus">SA1223</name>
</gene>
<reference key="1">
    <citation type="journal article" date="2001" name="Lancet">
        <title>Whole genome sequencing of meticillin-resistant Staphylococcus aureus.</title>
        <authorList>
            <person name="Kuroda M."/>
            <person name="Ohta T."/>
            <person name="Uchiyama I."/>
            <person name="Baba T."/>
            <person name="Yuzawa H."/>
            <person name="Kobayashi I."/>
            <person name="Cui L."/>
            <person name="Oguchi A."/>
            <person name="Aoki K."/>
            <person name="Nagai Y."/>
            <person name="Lian J.-Q."/>
            <person name="Ito T."/>
            <person name="Kanamori M."/>
            <person name="Matsumaru H."/>
            <person name="Maruyama A."/>
            <person name="Murakami H."/>
            <person name="Hosoyama A."/>
            <person name="Mizutani-Ui Y."/>
            <person name="Takahashi N.K."/>
            <person name="Sawano T."/>
            <person name="Inoue R."/>
            <person name="Kaito C."/>
            <person name="Sekimizu K."/>
            <person name="Hirakawa H."/>
            <person name="Kuhara S."/>
            <person name="Goto S."/>
            <person name="Yabuzaki J."/>
            <person name="Kanehisa M."/>
            <person name="Yamashita A."/>
            <person name="Oshima K."/>
            <person name="Furuya K."/>
            <person name="Yoshino C."/>
            <person name="Shiba T."/>
            <person name="Hattori M."/>
            <person name="Ogasawara N."/>
            <person name="Hayashi H."/>
            <person name="Hiramatsu K."/>
        </authorList>
    </citation>
    <scope>NUCLEOTIDE SEQUENCE [LARGE SCALE GENOMIC DNA]</scope>
    <source>
        <strain>N315</strain>
    </source>
</reference>
<reference key="2">
    <citation type="submission" date="2007-10" db="UniProtKB">
        <title>Shotgun proteomic analysis of total and membrane protein extracts of S. aureus strain N315.</title>
        <authorList>
            <person name="Vaezzadeh A.R."/>
            <person name="Deshusses J."/>
            <person name="Lescuyer P."/>
            <person name="Hochstrasser D.F."/>
        </authorList>
    </citation>
    <scope>IDENTIFICATION BY MASS SPECTROMETRY [LARGE SCALE ANALYSIS]</scope>
    <source>
        <strain>N315</strain>
    </source>
</reference>
<keyword id="KW-0843">Virulence</keyword>
<dbReference type="EMBL" id="BA000018">
    <property type="protein sequence ID" value="BAB42483.1"/>
    <property type="molecule type" value="Genomic_DNA"/>
</dbReference>
<dbReference type="PIR" id="G89915">
    <property type="entry name" value="G89915"/>
</dbReference>
<dbReference type="RefSeq" id="WP_001162352.1">
    <property type="nucleotide sequence ID" value="NC_002745.2"/>
</dbReference>
<dbReference type="SMR" id="Q7A5Q1"/>
<dbReference type="EnsemblBacteria" id="BAB42483">
    <property type="protein sequence ID" value="BAB42483"/>
    <property type="gene ID" value="BAB42483"/>
</dbReference>
<dbReference type="GeneID" id="66839583"/>
<dbReference type="KEGG" id="sau:SA1223"/>
<dbReference type="HOGENOM" id="CLU_064885_0_0_9"/>
<dbReference type="Gene3D" id="2.40.50.140">
    <property type="entry name" value="Nucleic acid-binding proteins"/>
    <property type="match status" value="2"/>
</dbReference>
<dbReference type="Gene3D" id="1.10.10.10">
    <property type="entry name" value="Winged helix-like DNA-binding domain superfamily/Winged helix DNA-binding domain"/>
    <property type="match status" value="1"/>
</dbReference>
<dbReference type="InterPro" id="IPR014464">
    <property type="entry name" value="CvfB_fam"/>
</dbReference>
<dbReference type="InterPro" id="IPR048588">
    <property type="entry name" value="CvfB_S1_2nd"/>
</dbReference>
<dbReference type="InterPro" id="IPR048587">
    <property type="entry name" value="CvfB_S1_3rd"/>
</dbReference>
<dbReference type="InterPro" id="IPR039566">
    <property type="entry name" value="CvfB_S1_st"/>
</dbReference>
<dbReference type="InterPro" id="IPR040764">
    <property type="entry name" value="CvfB_WH"/>
</dbReference>
<dbReference type="InterPro" id="IPR012340">
    <property type="entry name" value="NA-bd_OB-fold"/>
</dbReference>
<dbReference type="InterPro" id="IPR036388">
    <property type="entry name" value="WH-like_DNA-bd_sf"/>
</dbReference>
<dbReference type="PANTHER" id="PTHR37296">
    <property type="entry name" value="CONSERVED VIRULENCE FACTOR B"/>
    <property type="match status" value="1"/>
</dbReference>
<dbReference type="PANTHER" id="PTHR37296:SF1">
    <property type="entry name" value="CONSERVED VIRULENCE FACTOR B"/>
    <property type="match status" value="1"/>
</dbReference>
<dbReference type="Pfam" id="PF21191">
    <property type="entry name" value="CvfB_1st"/>
    <property type="match status" value="1"/>
</dbReference>
<dbReference type="Pfam" id="PF21543">
    <property type="entry name" value="CvfB_2nd"/>
    <property type="match status" value="1"/>
</dbReference>
<dbReference type="Pfam" id="PF17783">
    <property type="entry name" value="CvfB_WH"/>
    <property type="match status" value="1"/>
</dbReference>
<dbReference type="Pfam" id="PF13509">
    <property type="entry name" value="S1_2"/>
    <property type="match status" value="1"/>
</dbReference>
<dbReference type="PIRSF" id="PIRSF012524">
    <property type="entry name" value="YitL_S1"/>
    <property type="match status" value="1"/>
</dbReference>
<name>CVFB_STAAN</name>
<sequence length="300" mass="34185">MALDKDIVGSIEFLEVVGLQGSTYLLKGPNGENVKLNQSEMNDDDELEVGEEYSFFIYPNRSGELFATQNMPDITKDKYDFAKVLKTDRDGARIDVGLPREVLVPWEDLPKVKSLWPQPGDHLLVTLRIDRENHMYGRLASESVVENMFTPVHDDNLKNEVIEAKPYRVLRIGSFLLSESGYKIFVHESERKAEPRLGESVQVRIIGHNDKGELNGSFLPLAHERLDDDGQVIFDLLVEYDGELPFWDKSSPEAIKEVFNMSKGSFKRAIGHLYKQKIINIETGKITLTKKGWSRIDSKE</sequence>
<evidence type="ECO:0000250" key="1"/>
<evidence type="ECO:0000305" key="2"/>
<protein>
    <recommendedName>
        <fullName>Conserved virulence factor B</fullName>
    </recommendedName>
</protein>